<sequence>MKKIEFELHYQAQKALHACIDKANRYFQHQFPMPLLSYQLRGKAAGKAYLQLNQIRLNPILFKENKTAFLEEVIPHEVAHLLTYQLYGRVKPHGAEWQSIMQGVFLLPANTTHQFAVASVQGKTFQYRCQCREFPLTIRRHNKVLRNEASYTCQKCRQTLIFTGIQLS</sequence>
<comment type="cofactor">
    <cofactor evidence="2">
        <name>Zn(2+)</name>
        <dbReference type="ChEBI" id="CHEBI:29105"/>
    </cofactor>
    <text evidence="2">Binds 1 zinc ion.</text>
</comment>
<comment type="subcellular location">
    <subcellularLocation>
        <location evidence="2">Cytoplasm</location>
    </subcellularLocation>
</comment>
<comment type="similarity">
    <text evidence="2">Belongs to the SprT family.</text>
</comment>
<reference key="1">
    <citation type="journal article" date="2003" name="Genome Res.">
        <title>Comparative genome analysis of Vibrio vulnificus, a marine pathogen.</title>
        <authorList>
            <person name="Chen C.-Y."/>
            <person name="Wu K.-M."/>
            <person name="Chang Y.-C."/>
            <person name="Chang C.-H."/>
            <person name="Tsai H.-C."/>
            <person name="Liao T.-L."/>
            <person name="Liu Y.-M."/>
            <person name="Chen H.-J."/>
            <person name="Shen A.B.-T."/>
            <person name="Li J.-C."/>
            <person name="Su T.-L."/>
            <person name="Shao C.-P."/>
            <person name="Lee C.-T."/>
            <person name="Hor L.-I."/>
            <person name="Tsai S.-F."/>
        </authorList>
    </citation>
    <scope>NUCLEOTIDE SEQUENCE [LARGE SCALE GENOMIC DNA]</scope>
    <source>
        <strain>YJ016</strain>
    </source>
</reference>
<organism>
    <name type="scientific">Vibrio vulnificus (strain YJ016)</name>
    <dbReference type="NCBI Taxonomy" id="196600"/>
    <lineage>
        <taxon>Bacteria</taxon>
        <taxon>Pseudomonadati</taxon>
        <taxon>Pseudomonadota</taxon>
        <taxon>Gammaproteobacteria</taxon>
        <taxon>Vibrionales</taxon>
        <taxon>Vibrionaceae</taxon>
        <taxon>Vibrio</taxon>
    </lineage>
</organism>
<protein>
    <recommendedName>
        <fullName>Protein SprT</fullName>
    </recommendedName>
</protein>
<proteinExistence type="inferred from homology"/>
<accession>Q7MHK4</accession>
<name>SPRT_VIBVY</name>
<keyword id="KW-0963">Cytoplasm</keyword>
<keyword id="KW-0479">Metal-binding</keyword>
<keyword id="KW-0862">Zinc</keyword>
<dbReference type="EMBL" id="BA000037">
    <property type="protein sequence ID" value="BAC95629.1"/>
    <property type="molecule type" value="Genomic_DNA"/>
</dbReference>
<dbReference type="RefSeq" id="WP_011151189.1">
    <property type="nucleotide sequence ID" value="NC_005139.1"/>
</dbReference>
<dbReference type="STRING" id="672.VV93_v1c25710"/>
<dbReference type="KEGG" id="vvy:VV2865"/>
<dbReference type="PATRIC" id="fig|196600.6.peg.2852"/>
<dbReference type="eggNOG" id="COG3091">
    <property type="taxonomic scope" value="Bacteria"/>
</dbReference>
<dbReference type="HOGENOM" id="CLU_113336_0_1_6"/>
<dbReference type="Proteomes" id="UP000002675">
    <property type="component" value="Chromosome I"/>
</dbReference>
<dbReference type="GO" id="GO:0005737">
    <property type="term" value="C:cytoplasm"/>
    <property type="evidence" value="ECO:0007669"/>
    <property type="project" value="UniProtKB-SubCell"/>
</dbReference>
<dbReference type="GO" id="GO:0008270">
    <property type="term" value="F:zinc ion binding"/>
    <property type="evidence" value="ECO:0007669"/>
    <property type="project" value="UniProtKB-UniRule"/>
</dbReference>
<dbReference type="GO" id="GO:0006950">
    <property type="term" value="P:response to stress"/>
    <property type="evidence" value="ECO:0007669"/>
    <property type="project" value="UniProtKB-ARBA"/>
</dbReference>
<dbReference type="HAMAP" id="MF_00746">
    <property type="entry name" value="SprT"/>
    <property type="match status" value="1"/>
</dbReference>
<dbReference type="InterPro" id="IPR006640">
    <property type="entry name" value="SprT-like_domain"/>
</dbReference>
<dbReference type="InterPro" id="IPR035240">
    <property type="entry name" value="SprT_Zn_ribbon"/>
</dbReference>
<dbReference type="InterPro" id="IPR023483">
    <property type="entry name" value="Uncharacterised_SprT"/>
</dbReference>
<dbReference type="NCBIfam" id="NF003421">
    <property type="entry name" value="PRK04860.1"/>
    <property type="match status" value="1"/>
</dbReference>
<dbReference type="PANTHER" id="PTHR38773">
    <property type="entry name" value="PROTEIN SPRT"/>
    <property type="match status" value="1"/>
</dbReference>
<dbReference type="PANTHER" id="PTHR38773:SF1">
    <property type="entry name" value="PROTEIN SPRT"/>
    <property type="match status" value="1"/>
</dbReference>
<dbReference type="Pfam" id="PF10263">
    <property type="entry name" value="SprT-like"/>
    <property type="match status" value="1"/>
</dbReference>
<dbReference type="Pfam" id="PF17283">
    <property type="entry name" value="Zn_ribbon_SprT"/>
    <property type="match status" value="1"/>
</dbReference>
<dbReference type="SMART" id="SM00731">
    <property type="entry name" value="SprT"/>
    <property type="match status" value="1"/>
</dbReference>
<dbReference type="PROSITE" id="PS00142">
    <property type="entry name" value="ZINC_PROTEASE"/>
    <property type="match status" value="1"/>
</dbReference>
<evidence type="ECO:0000255" key="1"/>
<evidence type="ECO:0000305" key="2"/>
<gene>
    <name type="primary">sprT</name>
    <name type="ordered locus">VV2865</name>
</gene>
<feature type="chain" id="PRO_0000213283" description="Protein SprT">
    <location>
        <begin position="1"/>
        <end position="168"/>
    </location>
</feature>
<feature type="domain" description="SprT-like">
    <location>
        <begin position="17"/>
        <end position="161"/>
    </location>
</feature>
<feature type="active site" evidence="1">
    <location>
        <position position="77"/>
    </location>
</feature>
<feature type="binding site" evidence="1">
    <location>
        <position position="76"/>
    </location>
    <ligand>
        <name>Zn(2+)</name>
        <dbReference type="ChEBI" id="CHEBI:29105"/>
    </ligand>
</feature>
<feature type="binding site" evidence="1">
    <location>
        <position position="80"/>
    </location>
    <ligand>
        <name>Zn(2+)</name>
        <dbReference type="ChEBI" id="CHEBI:29105"/>
    </ligand>
</feature>